<name>VP8_VAR67</name>
<organismHost>
    <name type="scientific">Homo sapiens</name>
    <name type="common">Human</name>
    <dbReference type="NCBI Taxonomy" id="9606"/>
</organismHost>
<protein>
    <recommendedName>
        <fullName>Core protein VP8</fullName>
    </recommendedName>
    <alternativeName>
        <fullName>25 kDa major core protein</fullName>
    </alternativeName>
    <alternativeName>
        <fullName>L4 core protein</fullName>
    </alternativeName>
    <alternativeName>
        <fullName>P25K</fullName>
    </alternativeName>
</protein>
<reference key="1">
    <citation type="journal article" date="1993" name="Virus Res.">
        <title>Nucleotide sequence analysis of variola virus HindIII M, L, I genome fragments.</title>
        <authorList>
            <person name="Shchelkunov S.N."/>
            <person name="Blinov V.M."/>
            <person name="Totmenin A.V."/>
            <person name="Marennikova S.S."/>
            <person name="Kolykhalov A.A."/>
            <person name="Frolov I.V."/>
            <person name="Chizhikov V.E."/>
            <person name="Gytorov V.V."/>
            <person name="Gashikov P.V."/>
            <person name="Belanov E.F."/>
            <person name="Belavin P.A."/>
            <person name="Resenchuk S.M."/>
            <person name="Andzhaparidze O.G."/>
            <person name="Sandakhchiev L.S."/>
        </authorList>
    </citation>
    <scope>NUCLEOTIDE SEQUENCE [GENOMIC DNA]</scope>
</reference>
<reference key="2">
    <citation type="journal article" date="1993" name="FEBS Lett.">
        <title>Genes of variola and vaccinia viruses necessary to overcome the host protective mechanisms.</title>
        <authorList>
            <person name="Shchelkunov S.N."/>
            <person name="Blinov V.M."/>
            <person name="Sandakhchiev L.S."/>
        </authorList>
    </citation>
    <scope>NUCLEOTIDE SEQUENCE [LARGE SCALE GENOMIC DNA]</scope>
</reference>
<comment type="function">
    <text evidence="1">Major core structural protein.</text>
</comment>
<comment type="subcellular location">
    <subcellularLocation>
        <location evidence="1">Virion</location>
    </subcellularLocation>
    <subcellularLocation>
        <location evidence="1">Host cytoplasm</location>
    </subcellularLocation>
    <text evidence="1">Localizes to the virion core.</text>
</comment>
<comment type="induction">
    <text>Expressed in the late phase of the viral replicative cycle.</text>
</comment>
<comment type="PTM">
    <text evidence="1">Undergoes morphogenesis-associated proteolysis which cleaves the 28 kDa to a 25-kDa product. Proteolytic cleavage of major core proteins P4a (OPG136), P4b (OPG129), and VP8 (OPG098), which occurs at a late stage of core formation, is required for production of infectious mature virions (MV).</text>
</comment>
<comment type="similarity">
    <text evidence="2">Belongs to the orthopoxvirus OPG098 family.</text>
</comment>
<accession>P0DSW9</accession>
<accession>P33039</accession>
<organism>
    <name type="scientific">Variola virus (isolate Human/India/Ind3/1967)</name>
    <name type="common">VARV</name>
    <name type="synonym">Smallpox virus</name>
    <dbReference type="NCBI Taxonomy" id="587200"/>
    <lineage>
        <taxon>Viruses</taxon>
        <taxon>Varidnaviria</taxon>
        <taxon>Bamfordvirae</taxon>
        <taxon>Nucleocytoviricota</taxon>
        <taxon>Pokkesviricetes</taxon>
        <taxon>Chitovirales</taxon>
        <taxon>Poxviridae</taxon>
        <taxon>Chordopoxvirinae</taxon>
        <taxon>Orthopoxvirus</taxon>
        <taxon>Variola virus</taxon>
    </lineage>
</organism>
<dbReference type="EMBL" id="X67119">
    <property type="protein sequence ID" value="CAA47575.1"/>
    <property type="molecule type" value="Genomic_DNA"/>
</dbReference>
<dbReference type="EMBL" id="S55844">
    <property type="protein sequence ID" value="AAB24672.1"/>
    <property type="molecule type" value="Genomic_DNA"/>
</dbReference>
<dbReference type="EMBL" id="X69198">
    <property type="protein sequence ID" value="CAA49017.1"/>
    <property type="molecule type" value="Genomic_DNA"/>
</dbReference>
<dbReference type="PIR" id="A36845">
    <property type="entry name" value="A36845"/>
</dbReference>
<dbReference type="KEGG" id="vg:1486473"/>
<dbReference type="Proteomes" id="UP000002060">
    <property type="component" value="Segment"/>
</dbReference>
<dbReference type="GO" id="GO:0030430">
    <property type="term" value="C:host cell cytoplasm"/>
    <property type="evidence" value="ECO:0007669"/>
    <property type="project" value="UniProtKB-SubCell"/>
</dbReference>
<dbReference type="GO" id="GO:0019028">
    <property type="term" value="C:viral capsid"/>
    <property type="evidence" value="ECO:0007669"/>
    <property type="project" value="InterPro"/>
</dbReference>
<dbReference type="GO" id="GO:0005198">
    <property type="term" value="F:structural molecule activity"/>
    <property type="evidence" value="ECO:0007669"/>
    <property type="project" value="InterPro"/>
</dbReference>
<dbReference type="InterPro" id="IPR007586">
    <property type="entry name" value="VP8_pox_nuc-bd"/>
</dbReference>
<dbReference type="Pfam" id="PF04498">
    <property type="entry name" value="Pox_VP8_L4R"/>
    <property type="match status" value="1"/>
</dbReference>
<gene>
    <name type="primary">OPG098</name>
    <name type="ORF">L4R</name>
</gene>
<sequence>MSLLLENLIEEDTIFFAGSISEYDDLQMVIAGAKSKFPRSMLSIFNIVPRTMSKYELELIHNENITGAMFTTMYNIRNNLGLGDDKLTIEAIENYFLDPNNEVMPLIINNTDMTAVIPKKSGRRKNKNMVIFRQGSSPILCIFETRKKINIYKENMESASTEYTPIGDNKALISKYAGINVLNVYSPSTSMRLNAIYGFTNKNKLEKLSTNKELELYSSSPLQEPIRLNDFLGLLECVKKNIPLTDIPTKD</sequence>
<feature type="propeptide" id="PRO_0000040593" description="Removed by core protease OPG083" evidence="1">
    <location>
        <begin position="1"/>
        <end position="32"/>
    </location>
</feature>
<feature type="chain" id="PRO_0000040594" description="Core protein VP8" evidence="1">
    <location>
        <begin position="33"/>
        <end position="251"/>
    </location>
</feature>
<feature type="site" description="Cleavage; by core protease OPG083" evidence="1">
    <location>
        <begin position="18"/>
        <end position="19"/>
    </location>
</feature>
<feature type="site" description="Cleavage; by core protease OPG083" evidence="1">
    <location>
        <begin position="32"/>
        <end position="33"/>
    </location>
</feature>
<keyword id="KW-1035">Host cytoplasm</keyword>
<keyword id="KW-0426">Late protein</keyword>
<keyword id="KW-1185">Reference proteome</keyword>
<keyword id="KW-0946">Virion</keyword>
<evidence type="ECO:0000250" key="1">
    <source>
        <dbReference type="UniProtKB" id="P03295"/>
    </source>
</evidence>
<evidence type="ECO:0000305" key="2"/>
<proteinExistence type="evidence at transcript level"/>